<gene>
    <name type="primary">gag-pol</name>
</gene>
<name>POL_WDSV</name>
<protein>
    <recommendedName>
        <fullName>Gag-Pol polyprotein</fullName>
    </recommendedName>
    <component>
        <recommendedName>
            <fullName>Matrix protein p10</fullName>
            <shortName>MA</shortName>
        </recommendedName>
    </component>
    <component>
        <recommendedName>
            <fullName>p20</fullName>
        </recommendedName>
    </component>
    <component>
        <recommendedName>
            <fullName>Capsid protein p25</fullName>
            <shortName>CA</shortName>
        </recommendedName>
    </component>
    <component>
        <recommendedName>
            <fullName>Nucleocapsid protein p14</fullName>
            <shortName>NC-pol</shortName>
        </recommendedName>
    </component>
    <component>
        <recommendedName>
            <fullName>Protease p15</fullName>
            <shortName>PR</shortName>
            <ecNumber>3.4.23.-</ecNumber>
        </recommendedName>
    </component>
    <component>
        <recommendedName>
            <fullName>Reverse transcriptase/ribonuclease H p90</fullName>
            <shortName>RT</shortName>
            <ecNumber>2.7.7.49</ecNumber>
            <ecNumber>2.7.7.7</ecNumber>
            <ecNumber>3.1.26.4</ecNumber>
        </recommendedName>
    </component>
    <component>
        <recommendedName>
            <fullName>Integrase p46</fullName>
            <shortName>IN</shortName>
            <ecNumber evidence="10">2.7.7.-</ecNumber>
            <ecNumber evidence="10">3.1.-.-</ecNumber>
        </recommendedName>
    </component>
</protein>
<accession>O92815</accession>
<organism>
    <name type="scientific">Walleye dermal sarcoma virus</name>
    <name type="common">WDSV</name>
    <dbReference type="NCBI Taxonomy" id="39720"/>
    <lineage>
        <taxon>Viruses</taxon>
        <taxon>Riboviria</taxon>
        <taxon>Pararnavirae</taxon>
        <taxon>Artverviricota</taxon>
        <taxon>Revtraviricetes</taxon>
        <taxon>Ortervirales</taxon>
        <taxon>Retroviridae</taxon>
        <taxon>Orthoretrovirinae</taxon>
        <taxon>Epsilonretrovirus</taxon>
    </lineage>
</organism>
<feature type="initiator methionine" description="Removed" evidence="2">
    <location>
        <position position="1"/>
    </location>
</feature>
<feature type="chain" id="PRO_0000410592" description="Gag-Pol polyprotein">
    <location>
        <begin position="2"/>
        <end position="1752"/>
    </location>
</feature>
<feature type="chain" id="PRO_0000410593" description="Matrix protein p10">
    <location>
        <begin position="2"/>
        <end position="95"/>
    </location>
</feature>
<feature type="chain" id="PRO_0000410594" description="p20">
    <location>
        <begin position="96"/>
        <end position="251"/>
    </location>
</feature>
<feature type="chain" id="PRO_0000410595" description="Capsid protein p25">
    <location>
        <begin position="252"/>
        <end position="457"/>
    </location>
</feature>
<feature type="chain" id="PRO_0000410596" description="Nucleocapsid protein p14">
    <location>
        <begin position="458"/>
        <end position="584"/>
    </location>
</feature>
<feature type="chain" id="PRO_0000410597" description="Protease p15">
    <location>
        <begin position="585"/>
        <end position="722"/>
    </location>
</feature>
<feature type="chain" id="PRO_0000410598" description="Reverse transcriptase/ribonuclease H p90" evidence="1">
    <location>
        <begin position="723"/>
        <end position="1372"/>
    </location>
</feature>
<feature type="chain" id="PRO_0000410599" description="Integrase p46" evidence="1">
    <location>
        <begin position="1373"/>
        <end position="1752"/>
    </location>
</feature>
<feature type="domain" description="Peptidase A2">
    <location>
        <begin position="618"/>
        <end position="694"/>
    </location>
</feature>
<feature type="domain" description="Reverse transcriptase" evidence="4">
    <location>
        <begin position="793"/>
        <end position="977"/>
    </location>
</feature>
<feature type="domain" description="RNase H type-1" evidence="5">
    <location>
        <begin position="1222"/>
        <end position="1368"/>
    </location>
</feature>
<feature type="domain" description="Integrase catalytic" evidence="6">
    <location>
        <begin position="1482"/>
        <end position="1638"/>
    </location>
</feature>
<feature type="zinc finger region" description="CCHC-type" evidence="3">
    <location>
        <begin position="501"/>
        <end position="518"/>
    </location>
</feature>
<feature type="region of interest" description="Disordered" evidence="7">
    <location>
        <begin position="168"/>
        <end position="222"/>
    </location>
</feature>
<feature type="coiled-coil region" evidence="2">
    <location>
        <begin position="154"/>
        <end position="185"/>
    </location>
</feature>
<feature type="compositionally biased region" description="Basic and acidic residues" evidence="7">
    <location>
        <begin position="168"/>
        <end position="178"/>
    </location>
</feature>
<feature type="compositionally biased region" description="Polar residues" evidence="7">
    <location>
        <begin position="201"/>
        <end position="217"/>
    </location>
</feature>
<feature type="active site" description="Protease; shared with dimeric partner" evidence="1">
    <location>
        <position position="623"/>
    </location>
</feature>
<feature type="binding site" evidence="1">
    <location>
        <position position="861"/>
    </location>
    <ligand>
        <name>Mg(2+)</name>
        <dbReference type="ChEBI" id="CHEBI:18420"/>
        <label>1</label>
        <note>catalytic; for reverse transcriptase activity</note>
    </ligand>
</feature>
<feature type="binding site" evidence="1">
    <location>
        <position position="928"/>
    </location>
    <ligand>
        <name>Mg(2+)</name>
        <dbReference type="ChEBI" id="CHEBI:18420"/>
        <label>1</label>
        <note>catalytic; for reverse transcriptase activity</note>
    </ligand>
</feature>
<feature type="binding site" evidence="1">
    <location>
        <position position="929"/>
    </location>
    <ligand>
        <name>Mg(2+)</name>
        <dbReference type="ChEBI" id="CHEBI:18420"/>
        <label>1</label>
        <note>catalytic; for reverse transcriptase activity</note>
    </ligand>
</feature>
<feature type="binding site" evidence="5">
    <location>
        <position position="1231"/>
    </location>
    <ligand>
        <name>Mg(2+)</name>
        <dbReference type="ChEBI" id="CHEBI:18420"/>
        <note>for RNase H activity</note>
    </ligand>
</feature>
<feature type="binding site" evidence="5">
    <location>
        <position position="1269"/>
    </location>
    <ligand>
        <name>Mg(2+)</name>
        <dbReference type="ChEBI" id="CHEBI:18420"/>
        <note>for RNase H activity</note>
    </ligand>
</feature>
<feature type="binding site" evidence="5">
    <location>
        <position position="1290"/>
    </location>
    <ligand>
        <name>Mg(2+)</name>
        <dbReference type="ChEBI" id="CHEBI:18420"/>
        <note>for RNase H activity</note>
    </ligand>
</feature>
<feature type="binding site" evidence="5">
    <location>
        <position position="1360"/>
    </location>
    <ligand>
        <name>Mg(2+)</name>
        <dbReference type="ChEBI" id="CHEBI:18420"/>
        <note>for RNase H activity</note>
    </ligand>
</feature>
<feature type="binding site" evidence="1">
    <location>
        <position position="1493"/>
    </location>
    <ligand>
        <name>Mg(2+)</name>
        <dbReference type="ChEBI" id="CHEBI:18420"/>
        <label>3</label>
        <note>catalytic; for integrase activity</note>
    </ligand>
</feature>
<feature type="binding site" evidence="1">
    <location>
        <position position="1550"/>
    </location>
    <ligand>
        <name>Mg(2+)</name>
        <dbReference type="ChEBI" id="CHEBI:18420"/>
        <label>3</label>
        <note>catalytic; for integrase activity</note>
    </ligand>
</feature>
<feature type="site" description="Cleavage; by viral protease" evidence="1">
    <location>
        <begin position="95"/>
        <end position="96"/>
    </location>
</feature>
<feature type="site" description="Cleavage; by viral protease" evidence="1">
    <location>
        <begin position="251"/>
        <end position="252"/>
    </location>
</feature>
<feature type="site" description="Cleavage; by viral protease" evidence="1">
    <location>
        <begin position="457"/>
        <end position="458"/>
    </location>
</feature>
<feature type="site" description="Cleavage; by viral protease" evidence="1">
    <location>
        <begin position="584"/>
        <end position="585"/>
    </location>
</feature>
<feature type="site" description="Cleavage; by viral protease" evidence="1">
    <location>
        <begin position="722"/>
        <end position="723"/>
    </location>
</feature>
<feature type="site" description="Cleavage; by viral protease" evidence="1">
    <location>
        <begin position="1372"/>
        <end position="1373"/>
    </location>
</feature>
<feature type="lipid moiety-binding region" description="N-myristoyl glycine; by host" evidence="1">
    <location>
        <position position="2"/>
    </location>
</feature>
<organismHost>
    <name type="scientific">Sander vitreus</name>
    <name type="common">Walleye</name>
    <name type="synonym">Perca vitrea</name>
    <dbReference type="NCBI Taxonomy" id="283036"/>
</organismHost>
<sequence length="1752" mass="196265">MGNSSSTPPPSALKNSDLFKTMLRTQYSGSVKTRRINQDIKKQYPLWPDQGTCATKHWEQAVLIPLDSVSEETAKVLNFLRVKIQARKGETARQMTAHTIKKLIVGTIDKNKQQTEILQKTDESDEEMDTTNTMLFIARNKRERIAQQQQADLAAQQQVLLLQREQQREQREKDIKKRDEKKKKLLPDTTQKVEQTDIGEASSSDASAQKPISTDNNPDLKVDGVLTRSQHTTVPSNITIKKDGTSVQYQHPIRNYPTGEGNLTAQVRNPFRPLELQQLRKDCPALPEGIPQLAEWLTQTMAIYNCDEADVEQLARVIFPTPVRQIAGVINGHAAANTAAKIQNYVTACRQHYPAVCDWGTIQAFTYKPPQTAHEYVKHAEIIFKNNSGLEWQHATVPFINMVVQGLPPKVTRSLMSGNPDWSTKTIPQIIPLMQHYLNLQSRQDAKIKQTPLVLQLAMPAQTMNGNKGYVGSYPTNEPYYSFQQQQRPAPRAPPGNVPSNTCFFCKQPGHWKADCPNKTRNLRNMGNMGRGGRMGGPPYRSQPYPAFIQPPQNHQNQYNGRMDRSQLQASAQEWLPGTYPAXDPIDCPYEKSGTKTTQDVITTKNAEIMVTVNHTKIPMLVDTGACLTAIGGAATVVPDLKLTNTEIIAVGISAEPVPHVLAKPTKIQIENTNIDISPWYNPDQTFHILGRDTLSKMRAIVSFEKNGEMTVLLPPTYHKQLSCQTKNTLNIDEYLLQFPDQLWASLPTDIGRMLVPPITIKIKDNASLPSIRQYPLPKDKTEGLRPLISSLENQGILIKCHSPCNTPIFPIKKAGRDEYRMIHDLRAINNIVAPLTAVVASPTTVLSNLAPSLHWFTVIDLSNAFFSVPIHKDSQYLFAFTFEGHQYTWTVLPQGFIHSPTLFSQALYQSLHKIKFKISSEICIYMDDVLIASKDRDTNLKDTAVMLQHLASEGHKVSKKKLQLCQQEVVYLGQLLTPEGRKILPDRKVTVSQFQQPTTIRQIRAFLGLVGYCRHWIPEFSIHSKFLEKQLKKDTAEPFQLDDQQVEAFNKLKHAITTAPVLVVPDPAKPFQLYTSHSEHASIAVLTQKHAGRTRPIAFLSSKFDAIESGLPPCLKACASIHRSLTQADSFILGAPLIIYTTHAICTLLQRDRSQLVTASRFSKWEADLLRPELTFVACSAVSPAHLYMQSCENNIPPHDCVLLTHTISRPRPDLSDLPIPDPDMTLFSDGSYTTGRGGAAVVMHRPVTDDFIIIHQQPGGASAQTAELLALAAACHLATDKTVNIYTDSRYAYGVVHDFGHLWMHRGFVTSAGTPIKNHKEIEYLLKQIMKPKQVSVIKIEAHTKGVSMEVRGNAAADEAAKNAVFLVQRVLKKGDALASTDLVMEYSETDEKFTAGAELHDGVFMRGDLIVPPLEMLHAILLAIHGVSHTHKGGIMSYFSKFWTHPKASQTIDLILGHCQICLKHNPKYKSRLQGHRPLPSRPFAHLQIDFVQMCVKKPMYALVIIDVFSKWPEIIPCNKEDAKTVCDILMKDIIPRWGLPDQIDSDQGTHFTAKISQELTHSIGVAWKLHCPGHPRSSGIVERTNRTLKSKIIKAQEQLQLSKWTEVLPYVLLEMRATPKKHGLSPHEIVMGRPMKTTYLSDMSPLWATDTLVTYMNKLTRQLSAYHQQVVDQWPSTSLPPGPEPGSWCMLRNPKKSSNWEGPFLILLSTPTAVKVEGRPTWIHLDHCKLLRSSLSSSLGGPVNQLLS</sequence>
<proteinExistence type="evidence at protein level"/>
<reference key="1">
    <citation type="journal article" date="1995" name="J. Virol.">
        <title>Nucleotide sequence and protein analysis of a complex piscine retrovirus, walleye dermal sarcoma virus.</title>
        <authorList>
            <person name="Holzschu D.L."/>
            <person name="Martineau D."/>
            <person name="Fodor S.K."/>
            <person name="Vogt V.M."/>
            <person name="Bowser P.R."/>
            <person name="Casey J.W."/>
        </authorList>
    </citation>
    <scope>NUCLEOTIDE SEQUENCE [GENOMIC RNA]</scope>
    <scope>PROTEIN SEQUENCE OF 96-105; 252-266 AND 458-467</scope>
    <scope>PROTEOLYTIC PROCESSING OF POLYPROTEIN</scope>
</reference>
<reference key="2">
    <citation type="submission" date="1997-11" db="EMBL/GenBank/DDBJ databases">
        <authorList>
            <person name="Chappey C."/>
        </authorList>
    </citation>
    <scope>NUCLEOTIDE SEQUENCE [GENOMIC RNA]</scope>
</reference>
<reference key="3">
    <citation type="journal article" date="2002" name="J. Virol.">
        <title>Characterization of the protease of a fish retrovirus, walleye dermal sarcoma virus.</title>
        <authorList>
            <person name="Fodor S.K."/>
            <person name="Vogt V.M."/>
        </authorList>
    </citation>
    <scope>PROTEIN SEQUENCE OF 585-589</scope>
    <scope>CHARACTERIZATION OF PROTEASE P15</scope>
    <scope>PROTEOLYTIC PROCESSING OF POLYPROTEIN</scope>
</reference>
<reference key="4">
    <citation type="journal article" date="2013" name="PLoS ONE">
        <title>Biochemical characterization of novel retroviral integrase proteins.</title>
        <authorList>
            <person name="Ballandras-Colas A."/>
            <person name="Naraharisetty H."/>
            <person name="Li X."/>
            <person name="Serrao E."/>
            <person name="Engelman A."/>
        </authorList>
    </citation>
    <scope>FUNCTION (INTEGRASE)</scope>
</reference>
<comment type="function">
    <molecule>Matrix protein p10</molecule>
    <text evidence="1">Targets Gag and gag-pol polyproteins to the plasma membrane via a multipartite membrane binding signal, that includes its myristoylated N-terminus. Also mediates nuclear localization of the pre-integration complex (By similarity).</text>
</comment>
<comment type="function">
    <text evidence="1">Capsid protein p25 forms the spherical core of the virion that encapsulates the genomic RNA-nucleocapsid complex.</text>
</comment>
<comment type="function">
    <molecule>Nucleocapsid protein p14</molecule>
    <text evidence="1">Involved in the packaging and encapsidation of two copies of the genome. Binds with high affinity to conserved UCUG elements within the packaging signal, located near the 5'-end of the genome. This binding is dependent on genome dimerization (By similarity).</text>
</comment>
<comment type="function">
    <molecule>Protease p15</molecule>
    <text evidence="1">Mediates proteolytic cleavages of Gag and Gag-Pol polyproteins during or shortly after the release of the virion from the plasma membrane. Cleavages take place as an ordered, step-wise cascade to yield mature proteins. This process is called maturation. Displays maximal activity during the budding process just prior to particle release from the cell (By similarity).</text>
</comment>
<comment type="function">
    <molecule>Reverse transcriptase/ribonuclease H p90</molecule>
    <text evidence="1">Is a multifunctional enzyme that converts the viral dimeric RNA genome into dsDNA in the cytoplasm, shortly after virus entry into the cell. This enzyme displays a DNA polymerase activity that can copy either DNA or RNA templates, and a ribonuclease H (RNase H) activity that cleaves the RNA strand of RNA-DNA heteroduplexes in a partially processive 3' to 5' endonucleasic mode. Conversion of viral genomic RNA into dsDNA requires many steps. A tRNA binds to the primer-binding site (PBS) situated at the 5' end of the viral RNA. RT uses the 3' end of the tRNA primer to perform a short round of RNA-dependent minus-strand DNA synthesis. The reading proceeds through the U5 region and ends after the repeated (R) region which is present at both ends of viral RNA. The portion of the RNA-DNA heteroduplex is digested by the RNase H, resulting in a ssDNA product attached to the tRNA primer. This ssDNA/tRNA hybridizes with the identical R region situated at the 3' end of viral RNA. This template exchange, known as minus-strand DNA strong stop transfer, can be either intra- or intermolecular. RT uses the 3' end of this newly synthesized short ssDNA to perform the RNA-dependent minus-strand DNA synthesis of the whole template. RNase H digests the RNA template except for a polypurine tract (PPT) situated at the 5' end of the genome. It is not clear if both polymerase and RNase H activities are simultaneous. RNase H probably can proceed both in a polymerase-dependent (RNA cut into small fragments by the same RT performing DNA synthesis) and a polymerase-independent mode (cleavage of remaining RNA fragments by free RTs). Secondly, RT performs DNA-directed plus-strand DNA synthesis using the PPT that has not been removed by RNase H as primers. PPT and tRNA primers are then removed by RNase H. The 3' and 5' ssDNA PBS regions hybridize to form a circular dsDNA intermediate. Strand displacement synthesis by RT to the PBS and PPT ends produces a blunt ended, linear dsDNA copy of the viral genome that includes long terminal repeats (LTRs) at both ends (By similarity).</text>
</comment>
<comment type="function">
    <molecule>Integrase p46</molecule>
    <text evidence="8">Catalyzes viral DNA integration into the host chromosome, by performing a series of DNA cutting and joining reactions. This enzyme activity takes place after virion entry into a cell and reverse transcription of the RNA genome in dsDNA. The first step in the integration process is 3' processing. This step requires a complex comprising the viral genome, matrix protein and integrase. This complex is called the pre-integration complex (PIC). The integrase protein removes 2 nucleotides from each 3' end of the viral DNA, leaving recessed CA OH's at the 3' ends. In the second step that requires cell division, the PIC enters cell nucleus. In the third step, termed strand transfer, the integrase protein joins the previously processed 3' ends to the 5' ends of strands of target cellular DNA at the site of integration. The last step is viral DNA integration into host chromosome.</text>
</comment>
<comment type="function">
    <molecule>Gag-Pol polyprotein</molecule>
    <text evidence="1">Plays a role in budding and is processed by the viral protease during virion maturation outside the cell.</text>
</comment>
<comment type="catalytic activity">
    <reaction evidence="4">
        <text>DNA(n) + a 2'-deoxyribonucleoside 5'-triphosphate = DNA(n+1) + diphosphate</text>
        <dbReference type="Rhea" id="RHEA:22508"/>
        <dbReference type="Rhea" id="RHEA-COMP:17339"/>
        <dbReference type="Rhea" id="RHEA-COMP:17340"/>
        <dbReference type="ChEBI" id="CHEBI:33019"/>
        <dbReference type="ChEBI" id="CHEBI:61560"/>
        <dbReference type="ChEBI" id="CHEBI:173112"/>
        <dbReference type="EC" id="2.7.7.49"/>
    </reaction>
</comment>
<comment type="catalytic activity">
    <reaction evidence="4">
        <text>DNA(n) + a 2'-deoxyribonucleoside 5'-triphosphate = DNA(n+1) + diphosphate</text>
        <dbReference type="Rhea" id="RHEA:22508"/>
        <dbReference type="Rhea" id="RHEA-COMP:17339"/>
        <dbReference type="Rhea" id="RHEA-COMP:17340"/>
        <dbReference type="ChEBI" id="CHEBI:33019"/>
        <dbReference type="ChEBI" id="CHEBI:61560"/>
        <dbReference type="ChEBI" id="CHEBI:173112"/>
        <dbReference type="EC" id="2.7.7.7"/>
    </reaction>
</comment>
<comment type="catalytic activity">
    <reaction evidence="5">
        <text>Endonucleolytic cleavage to 5'-phosphomonoester.</text>
        <dbReference type="EC" id="3.1.26.4"/>
    </reaction>
</comment>
<comment type="cofactor">
    <cofactor evidence="1">
        <name>Mg(2+)</name>
        <dbReference type="ChEBI" id="CHEBI:18420"/>
    </cofactor>
    <text evidence="1">Binds 2 magnesium ions for reverse transcriptase polymerase activity.</text>
</comment>
<comment type="cofactor">
    <cofactor evidence="1">
        <name>Mg(2+)</name>
        <dbReference type="ChEBI" id="CHEBI:18420"/>
    </cofactor>
    <text evidence="1">Binds 2 magnesium ions for ribonuclease H (RNase H) activity.</text>
</comment>
<comment type="cofactor">
    <cofactor evidence="1">
        <name>Mg(2+)</name>
        <dbReference type="ChEBI" id="CHEBI:18420"/>
    </cofactor>
    <text evidence="1">Magnesium ions are required for integrase activity. Binds at least 1, maybe 2 magnesium ions.</text>
</comment>
<comment type="biophysicochemical properties">
    <phDependence>
        <text>Optimum pH is 7.0 for protease p14.</text>
    </phDependence>
</comment>
<comment type="subunit">
    <molecule>Capsid protein p25</molecule>
    <text evidence="1">Homohexamer. Further associates as homomultimer. The virus core is composed of a lattice formed from hexagonal rings, each containing six capsid monomers. The protease is a homodimer, whose active site consists of two apposed aspartic acid residues. The reverse transcriptase is a monomer (By similarity).</text>
</comment>
<comment type="subcellular location">
    <molecule>Gag-Pol polyprotein</molecule>
    <subcellularLocation>
        <location evidence="9">Host cell membrane</location>
        <topology evidence="9">Lipid-anchor</topology>
    </subcellularLocation>
</comment>
<comment type="subcellular location">
    <molecule>Matrix protein p10</molecule>
    <subcellularLocation>
        <location evidence="9">Virion</location>
    </subcellularLocation>
</comment>
<comment type="subcellular location">
    <molecule>Capsid protein p25</molecule>
    <subcellularLocation>
        <location evidence="9">Virion</location>
    </subcellularLocation>
</comment>
<comment type="subcellular location">
    <molecule>Nucleocapsid protein p14</molecule>
    <subcellularLocation>
        <location evidence="9">Virion</location>
    </subcellularLocation>
</comment>
<comment type="PTM">
    <text evidence="1">Specific enzymatic cleavages by the viral protease yield mature proteins. The protease is released by autocatalytic cleavage. The polyprotein is cleaved during and after budding, this process is termed maturation (By similarity).</text>
</comment>
<comment type="miscellaneous">
    <text evidence="1">This protein is translated as a gag-pol fusion protein by episodic readthrough of the gag protein termination codon. Readthrough of the terminator codon TAG occurs between the codons for 582-Ala and 584-Asp (By similarity).</text>
</comment>
<comment type="miscellaneous">
    <text evidence="1">The nucleocapsid protein p14 released from Pol polyprotein (NC-pol) is a few amino acids longer than the nucleocapsid protein p14 released from Gag polyprotein (NC-gag).</text>
</comment>
<comment type="miscellaneous">
    <text evidence="4">The reverse transcriptase is an error-prone enzyme that lacks a proof-reading function. High mutations rate is a direct consequence of this characteristic. RT also displays frequent template switching leading to high recombination rate. Recombination mostly occurs between homologous regions of the two copackaged RNA genomes. If these two RNA molecules derive from different viral strains, reverse transcription will give rise to highly recombinated proviral DNAs.</text>
</comment>
<keyword id="KW-0064">Aspartyl protease</keyword>
<keyword id="KW-0167">Capsid protein</keyword>
<keyword id="KW-0175">Coiled coil</keyword>
<keyword id="KW-0903">Direct protein sequencing</keyword>
<keyword id="KW-0229">DNA integration</keyword>
<keyword id="KW-0233">DNA recombination</keyword>
<keyword id="KW-0238">DNA-binding</keyword>
<keyword id="KW-0239">DNA-directed DNA polymerase</keyword>
<keyword id="KW-0255">Endonuclease</keyword>
<keyword id="KW-1032">Host cell membrane</keyword>
<keyword id="KW-1043">Host membrane</keyword>
<keyword id="KW-0378">Hydrolase</keyword>
<keyword id="KW-0449">Lipoprotein</keyword>
<keyword id="KW-0460">Magnesium</keyword>
<keyword id="KW-0472">Membrane</keyword>
<keyword id="KW-0479">Metal-binding</keyword>
<keyword id="KW-0511">Multifunctional enzyme</keyword>
<keyword id="KW-0519">Myristate</keyword>
<keyword id="KW-0540">Nuclease</keyword>
<keyword id="KW-0548">Nucleotidyltransferase</keyword>
<keyword id="KW-0597">Phosphoprotein</keyword>
<keyword id="KW-0645">Protease</keyword>
<keyword id="KW-1185">Reference proteome</keyword>
<keyword id="KW-1159">RNA suppression of termination</keyword>
<keyword id="KW-0694">RNA-binding</keyword>
<keyword id="KW-0695">RNA-directed DNA polymerase</keyword>
<keyword id="KW-0808">Transferase</keyword>
<keyword id="KW-0468">Viral matrix protein</keyword>
<keyword id="KW-0543">Viral nucleoprotein</keyword>
<keyword id="KW-0946">Virion</keyword>
<keyword id="KW-0862">Zinc</keyword>
<keyword id="KW-0863">Zinc-finger</keyword>
<evidence type="ECO:0000250" key="1"/>
<evidence type="ECO:0000255" key="2"/>
<evidence type="ECO:0000255" key="3">
    <source>
        <dbReference type="PROSITE-ProRule" id="PRU00047"/>
    </source>
</evidence>
<evidence type="ECO:0000255" key="4">
    <source>
        <dbReference type="PROSITE-ProRule" id="PRU00405"/>
    </source>
</evidence>
<evidence type="ECO:0000255" key="5">
    <source>
        <dbReference type="PROSITE-ProRule" id="PRU00408"/>
    </source>
</evidence>
<evidence type="ECO:0000255" key="6">
    <source>
        <dbReference type="PROSITE-ProRule" id="PRU00457"/>
    </source>
</evidence>
<evidence type="ECO:0000256" key="7">
    <source>
        <dbReference type="SAM" id="MobiDB-lite"/>
    </source>
</evidence>
<evidence type="ECO:0000269" key="8">
    <source>
    </source>
</evidence>
<evidence type="ECO:0000305" key="9"/>
<evidence type="ECO:0000305" key="10">
    <source>
    </source>
</evidence>
<dbReference type="EC" id="3.4.23.-"/>
<dbReference type="EC" id="2.7.7.49"/>
<dbReference type="EC" id="2.7.7.7"/>
<dbReference type="EC" id="3.1.26.4"/>
<dbReference type="EC" id="2.7.7.-" evidence="10"/>
<dbReference type="EC" id="3.1.-.-" evidence="10"/>
<dbReference type="EMBL" id="L41838">
    <property type="status" value="NOT_ANNOTATED_CDS"/>
    <property type="molecule type" value="Genomic_RNA"/>
</dbReference>
<dbReference type="EMBL" id="AF033822">
    <property type="protein sequence ID" value="AAC82611.2"/>
    <property type="molecule type" value="Genomic_RNA"/>
</dbReference>
<dbReference type="PIR" id="T09394">
    <property type="entry name" value="T09394"/>
</dbReference>
<dbReference type="MEROPS" id="A02.063"/>
<dbReference type="Proteomes" id="UP000007081">
    <property type="component" value="Segment"/>
</dbReference>
<dbReference type="Proteomes" id="UP000008337">
    <property type="component" value="Genome"/>
</dbReference>
<dbReference type="GO" id="GO:0020002">
    <property type="term" value="C:host cell plasma membrane"/>
    <property type="evidence" value="ECO:0007669"/>
    <property type="project" value="UniProtKB-SubCell"/>
</dbReference>
<dbReference type="GO" id="GO:0016020">
    <property type="term" value="C:membrane"/>
    <property type="evidence" value="ECO:0007669"/>
    <property type="project" value="UniProtKB-KW"/>
</dbReference>
<dbReference type="GO" id="GO:0019013">
    <property type="term" value="C:viral nucleocapsid"/>
    <property type="evidence" value="ECO:0007669"/>
    <property type="project" value="UniProtKB-KW"/>
</dbReference>
<dbReference type="GO" id="GO:0004190">
    <property type="term" value="F:aspartic-type endopeptidase activity"/>
    <property type="evidence" value="ECO:0007669"/>
    <property type="project" value="UniProtKB-KW"/>
</dbReference>
<dbReference type="GO" id="GO:0003677">
    <property type="term" value="F:DNA binding"/>
    <property type="evidence" value="ECO:0007669"/>
    <property type="project" value="UniProtKB-KW"/>
</dbReference>
<dbReference type="GO" id="GO:0003887">
    <property type="term" value="F:DNA-directed DNA polymerase activity"/>
    <property type="evidence" value="ECO:0007669"/>
    <property type="project" value="UniProtKB-KW"/>
</dbReference>
<dbReference type="GO" id="GO:0003723">
    <property type="term" value="F:RNA binding"/>
    <property type="evidence" value="ECO:0007669"/>
    <property type="project" value="UniProtKB-KW"/>
</dbReference>
<dbReference type="GO" id="GO:0003964">
    <property type="term" value="F:RNA-directed DNA polymerase activity"/>
    <property type="evidence" value="ECO:0007669"/>
    <property type="project" value="UniProtKB-KW"/>
</dbReference>
<dbReference type="GO" id="GO:0004523">
    <property type="term" value="F:RNA-DNA hybrid ribonuclease activity"/>
    <property type="evidence" value="ECO:0007669"/>
    <property type="project" value="UniProtKB-EC"/>
</dbReference>
<dbReference type="GO" id="GO:0039660">
    <property type="term" value="F:structural constituent of virion"/>
    <property type="evidence" value="ECO:0007669"/>
    <property type="project" value="UniProtKB-KW"/>
</dbReference>
<dbReference type="GO" id="GO:0008270">
    <property type="term" value="F:zinc ion binding"/>
    <property type="evidence" value="ECO:0007669"/>
    <property type="project" value="UniProtKB-KW"/>
</dbReference>
<dbReference type="GO" id="GO:0015074">
    <property type="term" value="P:DNA integration"/>
    <property type="evidence" value="ECO:0007669"/>
    <property type="project" value="UniProtKB-KW"/>
</dbReference>
<dbReference type="GO" id="GO:0006310">
    <property type="term" value="P:DNA recombination"/>
    <property type="evidence" value="ECO:0007669"/>
    <property type="project" value="UniProtKB-KW"/>
</dbReference>
<dbReference type="GO" id="GO:0006508">
    <property type="term" value="P:proteolysis"/>
    <property type="evidence" value="ECO:0007669"/>
    <property type="project" value="UniProtKB-KW"/>
</dbReference>
<dbReference type="FunFam" id="3.30.70.270:FF:000020">
    <property type="entry name" value="Transposon Tf2-6 polyprotein-like Protein"/>
    <property type="match status" value="1"/>
</dbReference>
<dbReference type="Gene3D" id="2.30.30.850">
    <property type="match status" value="1"/>
</dbReference>
<dbReference type="Gene3D" id="3.10.20.370">
    <property type="match status" value="1"/>
</dbReference>
<dbReference type="Gene3D" id="3.30.70.270">
    <property type="match status" value="2"/>
</dbReference>
<dbReference type="Gene3D" id="2.40.70.10">
    <property type="entry name" value="Acid Proteases"/>
    <property type="match status" value="1"/>
</dbReference>
<dbReference type="Gene3D" id="3.10.10.10">
    <property type="entry name" value="HIV Type 1 Reverse Transcriptase, subunit A, domain 1"/>
    <property type="match status" value="1"/>
</dbReference>
<dbReference type="Gene3D" id="3.30.420.10">
    <property type="entry name" value="Ribonuclease H-like superfamily/Ribonuclease H"/>
    <property type="match status" value="2"/>
</dbReference>
<dbReference type="Gene3D" id="4.10.60.10">
    <property type="entry name" value="Zinc finger, CCHC-type"/>
    <property type="match status" value="1"/>
</dbReference>
<dbReference type="InterPro" id="IPR043502">
    <property type="entry name" value="DNA/RNA_pol_sf"/>
</dbReference>
<dbReference type="InterPro" id="IPR001584">
    <property type="entry name" value="Integrase_cat-core"/>
</dbReference>
<dbReference type="InterPro" id="IPR040643">
    <property type="entry name" value="MLVIN_C"/>
</dbReference>
<dbReference type="InterPro" id="IPR021109">
    <property type="entry name" value="Peptidase_aspartic_dom_sf"/>
</dbReference>
<dbReference type="InterPro" id="IPR018061">
    <property type="entry name" value="Retropepsins"/>
</dbReference>
<dbReference type="InterPro" id="IPR050951">
    <property type="entry name" value="Retrovirus_Pol_polyprotein"/>
</dbReference>
<dbReference type="InterPro" id="IPR043128">
    <property type="entry name" value="Rev_trsase/Diguanyl_cyclase"/>
</dbReference>
<dbReference type="InterPro" id="IPR012337">
    <property type="entry name" value="RNaseH-like_sf"/>
</dbReference>
<dbReference type="InterPro" id="IPR002156">
    <property type="entry name" value="RNaseH_domain"/>
</dbReference>
<dbReference type="InterPro" id="IPR036397">
    <property type="entry name" value="RNaseH_sf"/>
</dbReference>
<dbReference type="InterPro" id="IPR000477">
    <property type="entry name" value="RT_dom"/>
</dbReference>
<dbReference type="InterPro" id="IPR041577">
    <property type="entry name" value="RT_RNaseH_2"/>
</dbReference>
<dbReference type="InterPro" id="IPR001878">
    <property type="entry name" value="Znf_CCHC"/>
</dbReference>
<dbReference type="InterPro" id="IPR036875">
    <property type="entry name" value="Znf_CCHC_sf"/>
</dbReference>
<dbReference type="PANTHER" id="PTHR37984">
    <property type="entry name" value="PROTEIN CBG26694"/>
    <property type="match status" value="1"/>
</dbReference>
<dbReference type="PANTHER" id="PTHR37984:SF5">
    <property type="entry name" value="PROTEIN NYNRIN-LIKE"/>
    <property type="match status" value="1"/>
</dbReference>
<dbReference type="Pfam" id="PF18697">
    <property type="entry name" value="MLVIN_C"/>
    <property type="match status" value="1"/>
</dbReference>
<dbReference type="Pfam" id="PF00075">
    <property type="entry name" value="RNase_H"/>
    <property type="match status" value="1"/>
</dbReference>
<dbReference type="Pfam" id="PF17919">
    <property type="entry name" value="RT_RNaseH_2"/>
    <property type="match status" value="1"/>
</dbReference>
<dbReference type="Pfam" id="PF00665">
    <property type="entry name" value="rve"/>
    <property type="match status" value="1"/>
</dbReference>
<dbReference type="Pfam" id="PF00077">
    <property type="entry name" value="RVP"/>
    <property type="match status" value="1"/>
</dbReference>
<dbReference type="Pfam" id="PF00078">
    <property type="entry name" value="RVT_1"/>
    <property type="match status" value="1"/>
</dbReference>
<dbReference type="Pfam" id="PF00098">
    <property type="entry name" value="zf-CCHC"/>
    <property type="match status" value="1"/>
</dbReference>
<dbReference type="SMART" id="SM00343">
    <property type="entry name" value="ZnF_C2HC"/>
    <property type="match status" value="1"/>
</dbReference>
<dbReference type="SUPFAM" id="SSF50630">
    <property type="entry name" value="Acid proteases"/>
    <property type="match status" value="1"/>
</dbReference>
<dbReference type="SUPFAM" id="SSF56672">
    <property type="entry name" value="DNA/RNA polymerases"/>
    <property type="match status" value="1"/>
</dbReference>
<dbReference type="SUPFAM" id="SSF57756">
    <property type="entry name" value="Retrovirus zinc finger-like domains"/>
    <property type="match status" value="1"/>
</dbReference>
<dbReference type="SUPFAM" id="SSF53098">
    <property type="entry name" value="Ribonuclease H-like"/>
    <property type="match status" value="2"/>
</dbReference>
<dbReference type="PROSITE" id="PS50994">
    <property type="entry name" value="INTEGRASE"/>
    <property type="match status" value="1"/>
</dbReference>
<dbReference type="PROSITE" id="PS50879">
    <property type="entry name" value="RNASE_H_1"/>
    <property type="match status" value="1"/>
</dbReference>
<dbReference type="PROSITE" id="PS50878">
    <property type="entry name" value="RT_POL"/>
    <property type="match status" value="1"/>
</dbReference>
<dbReference type="PROSITE" id="PS50158">
    <property type="entry name" value="ZF_CCHC"/>
    <property type="match status" value="1"/>
</dbReference>